<proteinExistence type="inferred from homology"/>
<keyword id="KW-0963">Cytoplasm</keyword>
<keyword id="KW-0378">Hydrolase</keyword>
<keyword id="KW-0694">RNA-binding</keyword>
<keyword id="KW-0820">tRNA-binding</keyword>
<feature type="chain" id="PRO_1000050819" description="D-aminoacyl-tRNA deacylase">
    <location>
        <begin position="1"/>
        <end position="152"/>
    </location>
</feature>
<feature type="short sequence motif" description="Gly-cisPro motif, important for rejection of L-amino acids" evidence="1">
    <location>
        <begin position="142"/>
        <end position="143"/>
    </location>
</feature>
<gene>
    <name evidence="1" type="primary">dtd</name>
    <name type="ordered locus">BMASAVP1_A0262</name>
</gene>
<organism>
    <name type="scientific">Burkholderia mallei (strain SAVP1)</name>
    <dbReference type="NCBI Taxonomy" id="320388"/>
    <lineage>
        <taxon>Bacteria</taxon>
        <taxon>Pseudomonadati</taxon>
        <taxon>Pseudomonadota</taxon>
        <taxon>Betaproteobacteria</taxon>
        <taxon>Burkholderiales</taxon>
        <taxon>Burkholderiaceae</taxon>
        <taxon>Burkholderia</taxon>
        <taxon>pseudomallei group</taxon>
    </lineage>
</organism>
<reference key="1">
    <citation type="journal article" date="2010" name="Genome Biol. Evol.">
        <title>Continuing evolution of Burkholderia mallei through genome reduction and large-scale rearrangements.</title>
        <authorList>
            <person name="Losada L."/>
            <person name="Ronning C.M."/>
            <person name="DeShazer D."/>
            <person name="Woods D."/>
            <person name="Fedorova N."/>
            <person name="Kim H.S."/>
            <person name="Shabalina S.A."/>
            <person name="Pearson T.R."/>
            <person name="Brinkac L."/>
            <person name="Tan P."/>
            <person name="Nandi T."/>
            <person name="Crabtree J."/>
            <person name="Badger J."/>
            <person name="Beckstrom-Sternberg S."/>
            <person name="Saqib M."/>
            <person name="Schutzer S.E."/>
            <person name="Keim P."/>
            <person name="Nierman W.C."/>
        </authorList>
    </citation>
    <scope>NUCLEOTIDE SEQUENCE [LARGE SCALE GENOMIC DNA]</scope>
    <source>
        <strain>SAVP1</strain>
    </source>
</reference>
<name>DTD_BURMS</name>
<accession>A1V060</accession>
<dbReference type="EC" id="3.1.1.96" evidence="1"/>
<dbReference type="EMBL" id="CP000526">
    <property type="protein sequence ID" value="ABM50668.1"/>
    <property type="molecule type" value="Genomic_DNA"/>
</dbReference>
<dbReference type="RefSeq" id="WP_004200499.1">
    <property type="nucleotide sequence ID" value="NC_008785.1"/>
</dbReference>
<dbReference type="SMR" id="A1V060"/>
<dbReference type="GeneID" id="93061498"/>
<dbReference type="KEGG" id="bmv:BMASAVP1_A0262"/>
<dbReference type="HOGENOM" id="CLU_076901_1_1_4"/>
<dbReference type="GO" id="GO:0005737">
    <property type="term" value="C:cytoplasm"/>
    <property type="evidence" value="ECO:0007669"/>
    <property type="project" value="UniProtKB-SubCell"/>
</dbReference>
<dbReference type="GO" id="GO:0051500">
    <property type="term" value="F:D-tyrosyl-tRNA(Tyr) deacylase activity"/>
    <property type="evidence" value="ECO:0007669"/>
    <property type="project" value="TreeGrafter"/>
</dbReference>
<dbReference type="GO" id="GO:0106026">
    <property type="term" value="F:Gly-tRNA(Ala) deacylase activity"/>
    <property type="evidence" value="ECO:0007669"/>
    <property type="project" value="UniProtKB-UniRule"/>
</dbReference>
<dbReference type="GO" id="GO:0043908">
    <property type="term" value="F:Ser(Gly)-tRNA(Ala) hydrolase activity"/>
    <property type="evidence" value="ECO:0007669"/>
    <property type="project" value="UniProtKB-UniRule"/>
</dbReference>
<dbReference type="GO" id="GO:0000049">
    <property type="term" value="F:tRNA binding"/>
    <property type="evidence" value="ECO:0007669"/>
    <property type="project" value="UniProtKB-UniRule"/>
</dbReference>
<dbReference type="GO" id="GO:0019478">
    <property type="term" value="P:D-amino acid catabolic process"/>
    <property type="evidence" value="ECO:0007669"/>
    <property type="project" value="UniProtKB-UniRule"/>
</dbReference>
<dbReference type="CDD" id="cd00563">
    <property type="entry name" value="Dtyr_deacylase"/>
    <property type="match status" value="1"/>
</dbReference>
<dbReference type="FunFam" id="3.50.80.10:FF:000001">
    <property type="entry name" value="D-aminoacyl-tRNA deacylase"/>
    <property type="match status" value="1"/>
</dbReference>
<dbReference type="Gene3D" id="3.50.80.10">
    <property type="entry name" value="D-tyrosyl-tRNA(Tyr) deacylase"/>
    <property type="match status" value="1"/>
</dbReference>
<dbReference type="HAMAP" id="MF_00518">
    <property type="entry name" value="Deacylase_Dtd"/>
    <property type="match status" value="1"/>
</dbReference>
<dbReference type="InterPro" id="IPR003732">
    <property type="entry name" value="Daa-tRNA_deacyls_DTD"/>
</dbReference>
<dbReference type="InterPro" id="IPR023509">
    <property type="entry name" value="DTD-like_sf"/>
</dbReference>
<dbReference type="NCBIfam" id="TIGR00256">
    <property type="entry name" value="D-aminoacyl-tRNA deacylase"/>
    <property type="match status" value="1"/>
</dbReference>
<dbReference type="PANTHER" id="PTHR10472:SF5">
    <property type="entry name" value="D-AMINOACYL-TRNA DEACYLASE 1"/>
    <property type="match status" value="1"/>
</dbReference>
<dbReference type="PANTHER" id="PTHR10472">
    <property type="entry name" value="D-TYROSYL-TRNA TYR DEACYLASE"/>
    <property type="match status" value="1"/>
</dbReference>
<dbReference type="Pfam" id="PF02580">
    <property type="entry name" value="Tyr_Deacylase"/>
    <property type="match status" value="1"/>
</dbReference>
<dbReference type="SUPFAM" id="SSF69500">
    <property type="entry name" value="DTD-like"/>
    <property type="match status" value="1"/>
</dbReference>
<sequence length="152" mass="16254">MIALIQRVKRADVRVGERVTGEIGPGLLALVCAERGDTEAAADKLLAKVLGYRVFSDAAGKMNLPVSNLDGAGRAGGLLLVSQFTLAADTNSGLRPSFTPAAPPDEGERLFDYFVRRARERHPIVATGEFGADMQVSLVNDGPVTFWLQTRA</sequence>
<protein>
    <recommendedName>
        <fullName evidence="1">D-aminoacyl-tRNA deacylase</fullName>
        <shortName evidence="1">DTD</shortName>
        <ecNumber evidence="1">3.1.1.96</ecNumber>
    </recommendedName>
    <alternativeName>
        <fullName evidence="1">Gly-tRNA(Ala) deacylase</fullName>
    </alternativeName>
</protein>
<comment type="function">
    <text evidence="1">An aminoacyl-tRNA editing enzyme that deacylates mischarged D-aminoacyl-tRNAs. Also deacylates mischarged glycyl-tRNA(Ala), protecting cells against glycine mischarging by AlaRS. Acts via tRNA-based rather than protein-based catalysis; rejects L-amino acids rather than detecting D-amino acids in the active site. By recycling D-aminoacyl-tRNA to D-amino acids and free tRNA molecules, this enzyme counteracts the toxicity associated with the formation of D-aminoacyl-tRNA entities in vivo and helps enforce protein L-homochirality.</text>
</comment>
<comment type="catalytic activity">
    <reaction evidence="1">
        <text>glycyl-tRNA(Ala) + H2O = tRNA(Ala) + glycine + H(+)</text>
        <dbReference type="Rhea" id="RHEA:53744"/>
        <dbReference type="Rhea" id="RHEA-COMP:9657"/>
        <dbReference type="Rhea" id="RHEA-COMP:13640"/>
        <dbReference type="ChEBI" id="CHEBI:15377"/>
        <dbReference type="ChEBI" id="CHEBI:15378"/>
        <dbReference type="ChEBI" id="CHEBI:57305"/>
        <dbReference type="ChEBI" id="CHEBI:78442"/>
        <dbReference type="ChEBI" id="CHEBI:78522"/>
        <dbReference type="EC" id="3.1.1.96"/>
    </reaction>
</comment>
<comment type="catalytic activity">
    <reaction evidence="1">
        <text>a D-aminoacyl-tRNA + H2O = a tRNA + a D-alpha-amino acid + H(+)</text>
        <dbReference type="Rhea" id="RHEA:13953"/>
        <dbReference type="Rhea" id="RHEA-COMP:10123"/>
        <dbReference type="Rhea" id="RHEA-COMP:10124"/>
        <dbReference type="ChEBI" id="CHEBI:15377"/>
        <dbReference type="ChEBI" id="CHEBI:15378"/>
        <dbReference type="ChEBI" id="CHEBI:59871"/>
        <dbReference type="ChEBI" id="CHEBI:78442"/>
        <dbReference type="ChEBI" id="CHEBI:79333"/>
        <dbReference type="EC" id="3.1.1.96"/>
    </reaction>
</comment>
<comment type="subunit">
    <text evidence="1">Homodimer.</text>
</comment>
<comment type="subcellular location">
    <subcellularLocation>
        <location evidence="1">Cytoplasm</location>
    </subcellularLocation>
</comment>
<comment type="domain">
    <text evidence="1">A Gly-cisPro motif from one monomer fits into the active site of the other monomer to allow specific chiral rejection of L-amino acids.</text>
</comment>
<comment type="similarity">
    <text evidence="1">Belongs to the DTD family.</text>
</comment>
<evidence type="ECO:0000255" key="1">
    <source>
        <dbReference type="HAMAP-Rule" id="MF_00518"/>
    </source>
</evidence>